<keyword id="KW-1015">Disulfide bond</keyword>
<keyword id="KW-0379">Hydroxylation</keyword>
<keyword id="KW-0166">Nematocyst</keyword>
<keyword id="KW-0964">Secreted</keyword>
<keyword id="KW-0732">Signal</keyword>
<keyword id="KW-0800">Toxin</keyword>
<name>TX1A_RADCR</name>
<sequence>MKPAIFLMLFVAMFLISEGEGFKPKDAPQERSVFSPVVQSCPRCHRRDHFGKCRKLDPCPD</sequence>
<reference key="1">
    <citation type="journal article" date="2024" name="Sci. Rep.">
        <title>Diversity analysis of sea anemone peptide toxins in different tissues of Heteractis crispa based on transcriptomics.</title>
        <authorList>
            <person name="Guo Q."/>
            <person name="Fu J."/>
            <person name="Yuan L."/>
            <person name="Liao Y."/>
            <person name="Li M."/>
            <person name="Li X."/>
            <person name="Yi B."/>
            <person name="Zhang J."/>
            <person name="Gao B."/>
        </authorList>
    </citation>
    <scope>NUCLEOTIDE SEQUENCE [MRNA]</scope>
</reference>
<comment type="function">
    <text evidence="1">Toxin that is lethal to crab. Does not produce the typical symptoms associated with sodium channel toxins in crabs, suggesting that it likely does not act on sodium channels.</text>
</comment>
<comment type="subcellular location">
    <subcellularLocation>
        <location evidence="5">Secreted</location>
    </subcellularLocation>
    <subcellularLocation>
        <location evidence="4">Nematocyst</location>
    </subcellularLocation>
</comment>
<comment type="miscellaneous">
    <text evidence="4">A synonymy between H.magnifica and R.crispa is controversial.</text>
</comment>
<comment type="similarity">
    <text evidence="4">Belongs to the Hau1a/HC18/HC19 family.</text>
</comment>
<protein>
    <recommendedName>
        <fullName evidence="4">U-stichotoxin-Hcr1a</fullName>
        <shortName evidence="4">U-SHTX-Hcr1a</shortName>
    </recommendedName>
    <alternativeName>
        <fullName evidence="3">HC-18</fullName>
    </alternativeName>
</protein>
<feature type="signal peptide" evidence="2">
    <location>
        <begin position="1"/>
        <end position="21"/>
    </location>
</feature>
<feature type="propeptide" id="PRO_0000462064" evidence="1">
    <location>
        <begin position="22"/>
        <end position="31"/>
    </location>
</feature>
<feature type="peptide" id="PRO_0000462065" description="U-stichotoxin-Hcr1a">
    <location>
        <begin position="32"/>
        <end position="61"/>
    </location>
</feature>
<feature type="modified residue" description="Hydroxyproline" evidence="1">
    <location>
        <position position="36"/>
    </location>
</feature>
<feature type="disulfide bond" evidence="4">
    <location>
        <begin position="41"/>
        <end position="53"/>
    </location>
</feature>
<feature type="disulfide bond" evidence="4">
    <location>
        <begin position="44"/>
        <end position="59"/>
    </location>
</feature>
<proteinExistence type="inferred from homology"/>
<organism>
    <name type="scientific">Radianthus crispa</name>
    <name type="common">Leathery sea anemone</name>
    <name type="synonym">Heteractis crispa</name>
    <dbReference type="NCBI Taxonomy" id="3122430"/>
    <lineage>
        <taxon>Eukaryota</taxon>
        <taxon>Metazoa</taxon>
        <taxon>Cnidaria</taxon>
        <taxon>Anthozoa</taxon>
        <taxon>Hexacorallia</taxon>
        <taxon>Actiniaria</taxon>
        <taxon>Stichodactylidae</taxon>
        <taxon>Radianthus</taxon>
    </lineage>
</organism>
<evidence type="ECO:0000250" key="1">
    <source>
        <dbReference type="UniProtKB" id="A0A0P0UTJ1"/>
    </source>
</evidence>
<evidence type="ECO:0000255" key="2"/>
<evidence type="ECO:0000303" key="3">
    <source>
    </source>
</evidence>
<evidence type="ECO:0000305" key="4"/>
<evidence type="ECO:0000305" key="5">
    <source>
    </source>
</evidence>
<accession>P0DY24</accession>